<proteinExistence type="inferred from homology"/>
<comment type="function">
    <text evidence="1">One of the primary rRNA binding proteins, it binds directly near the 3'-end of the 23S rRNA, where it nucleates assembly of the 50S subunit.</text>
</comment>
<comment type="subunit">
    <text evidence="1">Part of the 50S ribosomal subunit. Forms a cluster with proteins L14 and L24e.</text>
</comment>
<comment type="similarity">
    <text evidence="1">Belongs to the universal ribosomal protein uL3 family.</text>
</comment>
<dbReference type="EMBL" id="CP001463">
    <property type="protein sequence ID" value="ACS89354.1"/>
    <property type="molecule type" value="Genomic_DNA"/>
</dbReference>
<dbReference type="RefSeq" id="WP_015848574.1">
    <property type="nucleotide sequence ID" value="NC_012883.1"/>
</dbReference>
<dbReference type="SMR" id="C6A159"/>
<dbReference type="STRING" id="604354.TSIB_0288"/>
<dbReference type="GeneID" id="8095261"/>
<dbReference type="KEGG" id="tsi:TSIB_0288"/>
<dbReference type="eggNOG" id="arCOG04070">
    <property type="taxonomic scope" value="Archaea"/>
</dbReference>
<dbReference type="HOGENOM" id="CLU_033361_2_0_2"/>
<dbReference type="OrthoDB" id="6121at2157"/>
<dbReference type="Proteomes" id="UP000009079">
    <property type="component" value="Chromosome"/>
</dbReference>
<dbReference type="GO" id="GO:0022625">
    <property type="term" value="C:cytosolic large ribosomal subunit"/>
    <property type="evidence" value="ECO:0007669"/>
    <property type="project" value="TreeGrafter"/>
</dbReference>
<dbReference type="GO" id="GO:0019843">
    <property type="term" value="F:rRNA binding"/>
    <property type="evidence" value="ECO:0007669"/>
    <property type="project" value="UniProtKB-UniRule"/>
</dbReference>
<dbReference type="GO" id="GO:0003735">
    <property type="term" value="F:structural constituent of ribosome"/>
    <property type="evidence" value="ECO:0007669"/>
    <property type="project" value="InterPro"/>
</dbReference>
<dbReference type="GO" id="GO:0006412">
    <property type="term" value="P:translation"/>
    <property type="evidence" value="ECO:0007669"/>
    <property type="project" value="UniProtKB-UniRule"/>
</dbReference>
<dbReference type="Gene3D" id="3.30.1430.10">
    <property type="match status" value="1"/>
</dbReference>
<dbReference type="Gene3D" id="4.10.960.10">
    <property type="entry name" value="Ribosomal protein L3, domain 3"/>
    <property type="match status" value="1"/>
</dbReference>
<dbReference type="Gene3D" id="2.40.30.10">
    <property type="entry name" value="Translation factors"/>
    <property type="match status" value="1"/>
</dbReference>
<dbReference type="HAMAP" id="MF_01325_A">
    <property type="entry name" value="Ribosomal_uL3_A"/>
    <property type="match status" value="1"/>
</dbReference>
<dbReference type="InterPro" id="IPR045077">
    <property type="entry name" value="L3_arc_euk"/>
</dbReference>
<dbReference type="InterPro" id="IPR044892">
    <property type="entry name" value="Ribosomal_L3_dom_3_arc_sf"/>
</dbReference>
<dbReference type="InterPro" id="IPR000597">
    <property type="entry name" value="Ribosomal_uL3"/>
</dbReference>
<dbReference type="InterPro" id="IPR019928">
    <property type="entry name" value="Ribosomal_uL3_arc"/>
</dbReference>
<dbReference type="InterPro" id="IPR019926">
    <property type="entry name" value="Ribosomal_uL3_CS"/>
</dbReference>
<dbReference type="InterPro" id="IPR009000">
    <property type="entry name" value="Transl_B-barrel_sf"/>
</dbReference>
<dbReference type="NCBIfam" id="TIGR03626">
    <property type="entry name" value="L3_arch"/>
    <property type="match status" value="1"/>
</dbReference>
<dbReference type="NCBIfam" id="NF003261">
    <property type="entry name" value="PRK04231.1"/>
    <property type="match status" value="1"/>
</dbReference>
<dbReference type="PANTHER" id="PTHR11363">
    <property type="entry name" value="60S RIBOSOMAL PROTEIN L3-RELATED"/>
    <property type="match status" value="1"/>
</dbReference>
<dbReference type="PANTHER" id="PTHR11363:SF5">
    <property type="entry name" value="LARGE RIBOSOMAL SUBUNIT PROTEIN UL3"/>
    <property type="match status" value="1"/>
</dbReference>
<dbReference type="Pfam" id="PF00297">
    <property type="entry name" value="Ribosomal_L3"/>
    <property type="match status" value="1"/>
</dbReference>
<dbReference type="SUPFAM" id="SSF50447">
    <property type="entry name" value="Translation proteins"/>
    <property type="match status" value="1"/>
</dbReference>
<dbReference type="PROSITE" id="PS00474">
    <property type="entry name" value="RIBOSOMAL_L3"/>
    <property type="match status" value="1"/>
</dbReference>
<name>RL3_THESM</name>
<keyword id="KW-1185">Reference proteome</keyword>
<keyword id="KW-0687">Ribonucleoprotein</keyword>
<keyword id="KW-0689">Ribosomal protein</keyword>
<keyword id="KW-0694">RNA-binding</keyword>
<keyword id="KW-0699">rRNA-binding</keyword>
<sequence length="359" mass="40672">MGRISRPRRGSLAYSPRKRAKSIVPRIRKWPQEQEVRMLGFAGYKAGMTHVLMIDDAPGLTKGKEIFVPVTIVEAPPLMVYGIRAYKRGYFGLETATEVIVPDFKLENYPSKRAKNVTFYKLLERRIKTLPKNYTEEVFQQKLGELEDLVKTGEVVELRALVATQPWLARIKKKPEVMEYAVGGTSIEEKFNYIKEKLGKEIRVGEILQEGELLDIVAVTKGKGTQGPVKRWGVKLTSHKDSKGRRKVATIGPWHPARVMWTVPRAGQMGFHHRTEFNKRLLRIGENGKLTLNGEKIEITPNGGFPHYGVVKNDFIMIAGTIPGAIKRIIRMRPAVRPPAKRPPAEAPQITYISRESKQ</sequence>
<protein>
    <recommendedName>
        <fullName evidence="1">Large ribosomal subunit protein uL3</fullName>
    </recommendedName>
    <alternativeName>
        <fullName evidence="3">50S ribosomal protein L3</fullName>
    </alternativeName>
</protein>
<reference key="1">
    <citation type="journal article" date="2009" name="Appl. Environ. Microbiol.">
        <title>Metabolic versatility and indigenous origin of the archaeon Thermococcus sibiricus, isolated from a siberian oil reservoir, as revealed by genome analysis.</title>
        <authorList>
            <person name="Mardanov A.V."/>
            <person name="Ravin N.V."/>
            <person name="Svetlitchnyi V.A."/>
            <person name="Beletsky A.V."/>
            <person name="Miroshnichenko M.L."/>
            <person name="Bonch-Osmolovskaya E.A."/>
            <person name="Skryabin K.G."/>
        </authorList>
    </citation>
    <scope>NUCLEOTIDE SEQUENCE [LARGE SCALE GENOMIC DNA]</scope>
    <source>
        <strain>DSM 12597 / MM 739</strain>
    </source>
</reference>
<evidence type="ECO:0000255" key="1">
    <source>
        <dbReference type="HAMAP-Rule" id="MF_01325"/>
    </source>
</evidence>
<evidence type="ECO:0000256" key="2">
    <source>
        <dbReference type="SAM" id="MobiDB-lite"/>
    </source>
</evidence>
<evidence type="ECO:0000305" key="3"/>
<accession>C6A159</accession>
<organism>
    <name type="scientific">Thermococcus sibiricus (strain DSM 12597 / MM 739)</name>
    <dbReference type="NCBI Taxonomy" id="604354"/>
    <lineage>
        <taxon>Archaea</taxon>
        <taxon>Methanobacteriati</taxon>
        <taxon>Methanobacteriota</taxon>
        <taxon>Thermococci</taxon>
        <taxon>Thermococcales</taxon>
        <taxon>Thermococcaceae</taxon>
        <taxon>Thermococcus</taxon>
    </lineage>
</organism>
<feature type="chain" id="PRO_1000214529" description="Large ribosomal subunit protein uL3">
    <location>
        <begin position="1"/>
        <end position="359"/>
    </location>
</feature>
<feature type="region of interest" description="Disordered" evidence="2">
    <location>
        <begin position="336"/>
        <end position="359"/>
    </location>
</feature>
<gene>
    <name evidence="1" type="primary">rpl3</name>
    <name type="ordered locus">TSIB_0288</name>
</gene>